<name>EFGM_SCHJY</name>
<gene>
    <name type="primary">mef1</name>
    <name type="ORF">SJAG_02353</name>
</gene>
<dbReference type="EMBL" id="KE651166">
    <property type="protein sequence ID" value="EEB07267.1"/>
    <property type="molecule type" value="Genomic_DNA"/>
</dbReference>
<dbReference type="RefSeq" id="XP_002173560.1">
    <property type="nucleotide sequence ID" value="XM_002173524.1"/>
</dbReference>
<dbReference type="SMR" id="B6K286"/>
<dbReference type="STRING" id="402676.B6K286"/>
<dbReference type="EnsemblFungi" id="EEB07267">
    <property type="protein sequence ID" value="EEB07267"/>
    <property type="gene ID" value="SJAG_02353"/>
</dbReference>
<dbReference type="GeneID" id="7049998"/>
<dbReference type="JaponicusDB" id="SJAG_02353">
    <property type="gene designation" value="mef1"/>
</dbReference>
<dbReference type="VEuPathDB" id="FungiDB:SJAG_02353"/>
<dbReference type="eggNOG" id="KOG0465">
    <property type="taxonomic scope" value="Eukaryota"/>
</dbReference>
<dbReference type="HOGENOM" id="CLU_002794_4_1_1"/>
<dbReference type="OMA" id="GQFAKVQ"/>
<dbReference type="OrthoDB" id="198619at2759"/>
<dbReference type="UniPathway" id="UPA00345"/>
<dbReference type="Proteomes" id="UP000001744">
    <property type="component" value="Unassembled WGS sequence"/>
</dbReference>
<dbReference type="GO" id="GO:0005739">
    <property type="term" value="C:mitochondrion"/>
    <property type="evidence" value="ECO:0000318"/>
    <property type="project" value="GO_Central"/>
</dbReference>
<dbReference type="GO" id="GO:0005525">
    <property type="term" value="F:GTP binding"/>
    <property type="evidence" value="ECO:0007669"/>
    <property type="project" value="UniProtKB-UniRule"/>
</dbReference>
<dbReference type="GO" id="GO:0003924">
    <property type="term" value="F:GTPase activity"/>
    <property type="evidence" value="ECO:0000318"/>
    <property type="project" value="GO_Central"/>
</dbReference>
<dbReference type="GO" id="GO:0003746">
    <property type="term" value="F:translation elongation factor activity"/>
    <property type="evidence" value="ECO:0000318"/>
    <property type="project" value="GO_Central"/>
</dbReference>
<dbReference type="GO" id="GO:0070125">
    <property type="term" value="P:mitochondrial translational elongation"/>
    <property type="evidence" value="ECO:0000318"/>
    <property type="project" value="GO_Central"/>
</dbReference>
<dbReference type="CDD" id="cd01886">
    <property type="entry name" value="EF-G"/>
    <property type="match status" value="1"/>
</dbReference>
<dbReference type="CDD" id="cd16262">
    <property type="entry name" value="EFG_III"/>
    <property type="match status" value="1"/>
</dbReference>
<dbReference type="CDD" id="cd01434">
    <property type="entry name" value="EFG_mtEFG1_IV"/>
    <property type="match status" value="1"/>
</dbReference>
<dbReference type="CDD" id="cd04097">
    <property type="entry name" value="mtEFG1_C"/>
    <property type="match status" value="1"/>
</dbReference>
<dbReference type="CDD" id="cd04091">
    <property type="entry name" value="mtEFG1_II_like"/>
    <property type="match status" value="1"/>
</dbReference>
<dbReference type="FunFam" id="3.30.230.10:FF:000003">
    <property type="entry name" value="Elongation factor G"/>
    <property type="match status" value="1"/>
</dbReference>
<dbReference type="FunFam" id="3.30.70.870:FF:000001">
    <property type="entry name" value="Elongation factor G"/>
    <property type="match status" value="1"/>
</dbReference>
<dbReference type="FunFam" id="2.40.30.10:FF:000022">
    <property type="entry name" value="Elongation factor G, mitochondrial"/>
    <property type="match status" value="1"/>
</dbReference>
<dbReference type="FunFam" id="3.30.70.240:FF:000015">
    <property type="entry name" value="Elongation factor G, mitochondrial"/>
    <property type="match status" value="1"/>
</dbReference>
<dbReference type="FunFam" id="3.40.50.300:FF:000558">
    <property type="entry name" value="Elongation factor G, mitochondrial"/>
    <property type="match status" value="1"/>
</dbReference>
<dbReference type="Gene3D" id="3.30.230.10">
    <property type="match status" value="1"/>
</dbReference>
<dbReference type="Gene3D" id="3.30.70.240">
    <property type="match status" value="1"/>
</dbReference>
<dbReference type="Gene3D" id="3.30.70.870">
    <property type="entry name" value="Elongation Factor G (Translational Gtpase), domain 3"/>
    <property type="match status" value="1"/>
</dbReference>
<dbReference type="Gene3D" id="3.40.50.300">
    <property type="entry name" value="P-loop containing nucleotide triphosphate hydrolases"/>
    <property type="match status" value="1"/>
</dbReference>
<dbReference type="Gene3D" id="2.40.30.10">
    <property type="entry name" value="Translation factors"/>
    <property type="match status" value="1"/>
</dbReference>
<dbReference type="HAMAP" id="MF_00054_B">
    <property type="entry name" value="EF_G_EF_2_B"/>
    <property type="match status" value="1"/>
</dbReference>
<dbReference type="InterPro" id="IPR041095">
    <property type="entry name" value="EFG_II"/>
</dbReference>
<dbReference type="InterPro" id="IPR009022">
    <property type="entry name" value="EFG_III"/>
</dbReference>
<dbReference type="InterPro" id="IPR035647">
    <property type="entry name" value="EFG_III/V"/>
</dbReference>
<dbReference type="InterPro" id="IPR047872">
    <property type="entry name" value="EFG_IV"/>
</dbReference>
<dbReference type="InterPro" id="IPR035649">
    <property type="entry name" value="EFG_V"/>
</dbReference>
<dbReference type="InterPro" id="IPR000640">
    <property type="entry name" value="EFG_V-like"/>
</dbReference>
<dbReference type="InterPro" id="IPR004161">
    <property type="entry name" value="EFTu-like_2"/>
</dbReference>
<dbReference type="InterPro" id="IPR031157">
    <property type="entry name" value="G_TR_CS"/>
</dbReference>
<dbReference type="InterPro" id="IPR027417">
    <property type="entry name" value="P-loop_NTPase"/>
</dbReference>
<dbReference type="InterPro" id="IPR020568">
    <property type="entry name" value="Ribosomal_Su5_D2-typ_SF"/>
</dbReference>
<dbReference type="InterPro" id="IPR014721">
    <property type="entry name" value="Ribsml_uS5_D2-typ_fold_subgr"/>
</dbReference>
<dbReference type="InterPro" id="IPR005225">
    <property type="entry name" value="Small_GTP-bd"/>
</dbReference>
<dbReference type="InterPro" id="IPR000795">
    <property type="entry name" value="T_Tr_GTP-bd_dom"/>
</dbReference>
<dbReference type="InterPro" id="IPR009000">
    <property type="entry name" value="Transl_B-barrel_sf"/>
</dbReference>
<dbReference type="InterPro" id="IPR004540">
    <property type="entry name" value="Transl_elong_EFG/EF2"/>
</dbReference>
<dbReference type="InterPro" id="IPR005517">
    <property type="entry name" value="Transl_elong_EFG/EF2_IV"/>
</dbReference>
<dbReference type="NCBIfam" id="TIGR00484">
    <property type="entry name" value="EF-G"/>
    <property type="match status" value="1"/>
</dbReference>
<dbReference type="NCBIfam" id="NF009381">
    <property type="entry name" value="PRK12740.1-5"/>
    <property type="match status" value="1"/>
</dbReference>
<dbReference type="NCBIfam" id="TIGR00231">
    <property type="entry name" value="small_GTP"/>
    <property type="match status" value="1"/>
</dbReference>
<dbReference type="PANTHER" id="PTHR43636">
    <property type="entry name" value="ELONGATION FACTOR G, MITOCHONDRIAL"/>
    <property type="match status" value="1"/>
</dbReference>
<dbReference type="PANTHER" id="PTHR43636:SF2">
    <property type="entry name" value="ELONGATION FACTOR G, MITOCHONDRIAL"/>
    <property type="match status" value="1"/>
</dbReference>
<dbReference type="Pfam" id="PF00679">
    <property type="entry name" value="EFG_C"/>
    <property type="match status" value="1"/>
</dbReference>
<dbReference type="Pfam" id="PF14492">
    <property type="entry name" value="EFG_III"/>
    <property type="match status" value="1"/>
</dbReference>
<dbReference type="Pfam" id="PF03764">
    <property type="entry name" value="EFG_IV"/>
    <property type="match status" value="1"/>
</dbReference>
<dbReference type="Pfam" id="PF00009">
    <property type="entry name" value="GTP_EFTU"/>
    <property type="match status" value="1"/>
</dbReference>
<dbReference type="Pfam" id="PF03144">
    <property type="entry name" value="GTP_EFTU_D2"/>
    <property type="match status" value="1"/>
</dbReference>
<dbReference type="PRINTS" id="PR00315">
    <property type="entry name" value="ELONGATNFCT"/>
</dbReference>
<dbReference type="SMART" id="SM00838">
    <property type="entry name" value="EFG_C"/>
    <property type="match status" value="1"/>
</dbReference>
<dbReference type="SMART" id="SM00889">
    <property type="entry name" value="EFG_IV"/>
    <property type="match status" value="1"/>
</dbReference>
<dbReference type="SUPFAM" id="SSF54980">
    <property type="entry name" value="EF-G C-terminal domain-like"/>
    <property type="match status" value="2"/>
</dbReference>
<dbReference type="SUPFAM" id="SSF52540">
    <property type="entry name" value="P-loop containing nucleoside triphosphate hydrolases"/>
    <property type="match status" value="1"/>
</dbReference>
<dbReference type="SUPFAM" id="SSF54211">
    <property type="entry name" value="Ribosomal protein S5 domain 2-like"/>
    <property type="match status" value="1"/>
</dbReference>
<dbReference type="SUPFAM" id="SSF50447">
    <property type="entry name" value="Translation proteins"/>
    <property type="match status" value="1"/>
</dbReference>
<dbReference type="PROSITE" id="PS00301">
    <property type="entry name" value="G_TR_1"/>
    <property type="match status" value="1"/>
</dbReference>
<dbReference type="PROSITE" id="PS51722">
    <property type="entry name" value="G_TR_2"/>
    <property type="match status" value="1"/>
</dbReference>
<organism>
    <name type="scientific">Schizosaccharomyces japonicus (strain yFS275 / FY16936)</name>
    <name type="common">Fission yeast</name>
    <dbReference type="NCBI Taxonomy" id="402676"/>
    <lineage>
        <taxon>Eukaryota</taxon>
        <taxon>Fungi</taxon>
        <taxon>Dikarya</taxon>
        <taxon>Ascomycota</taxon>
        <taxon>Taphrinomycotina</taxon>
        <taxon>Schizosaccharomycetes</taxon>
        <taxon>Schizosaccharomycetales</taxon>
        <taxon>Schizosaccharomycetaceae</taxon>
        <taxon>Schizosaccharomyces</taxon>
    </lineage>
</organism>
<protein>
    <recommendedName>
        <fullName evidence="1">Elongation factor G, mitochondrial</fullName>
        <shortName evidence="1">EF-Gmt</shortName>
    </recommendedName>
    <alternativeName>
        <fullName evidence="1">Elongation factor G 1, mitochondrial</fullName>
        <shortName evidence="1">mEF-G 1</shortName>
    </alternativeName>
    <alternativeName>
        <fullName evidence="1">Elongation factor G1</fullName>
    </alternativeName>
</protein>
<evidence type="ECO:0000255" key="1">
    <source>
        <dbReference type="HAMAP-Rule" id="MF_03061"/>
    </source>
</evidence>
<evidence type="ECO:0000305" key="2"/>
<proteinExistence type="inferred from homology"/>
<keyword id="KW-0251">Elongation factor</keyword>
<keyword id="KW-0342">GTP-binding</keyword>
<keyword id="KW-0496">Mitochondrion</keyword>
<keyword id="KW-0547">Nucleotide-binding</keyword>
<keyword id="KW-0648">Protein biosynthesis</keyword>
<keyword id="KW-1185">Reference proteome</keyword>
<keyword id="KW-0809">Transit peptide</keyword>
<accession>B6K286</accession>
<reference key="1">
    <citation type="journal article" date="2011" name="Science">
        <title>Comparative functional genomics of the fission yeasts.</title>
        <authorList>
            <person name="Rhind N."/>
            <person name="Chen Z."/>
            <person name="Yassour M."/>
            <person name="Thompson D.A."/>
            <person name="Haas B.J."/>
            <person name="Habib N."/>
            <person name="Wapinski I."/>
            <person name="Roy S."/>
            <person name="Lin M.F."/>
            <person name="Heiman D.I."/>
            <person name="Young S.K."/>
            <person name="Furuya K."/>
            <person name="Guo Y."/>
            <person name="Pidoux A."/>
            <person name="Chen H.M."/>
            <person name="Robbertse B."/>
            <person name="Goldberg J.M."/>
            <person name="Aoki K."/>
            <person name="Bayne E.H."/>
            <person name="Berlin A.M."/>
            <person name="Desjardins C.A."/>
            <person name="Dobbs E."/>
            <person name="Dukaj L."/>
            <person name="Fan L."/>
            <person name="FitzGerald M.G."/>
            <person name="French C."/>
            <person name="Gujja S."/>
            <person name="Hansen K."/>
            <person name="Keifenheim D."/>
            <person name="Levin J.Z."/>
            <person name="Mosher R.A."/>
            <person name="Mueller C.A."/>
            <person name="Pfiffner J."/>
            <person name="Priest M."/>
            <person name="Russ C."/>
            <person name="Smialowska A."/>
            <person name="Swoboda P."/>
            <person name="Sykes S.M."/>
            <person name="Vaughn M."/>
            <person name="Vengrova S."/>
            <person name="Yoder R."/>
            <person name="Zeng Q."/>
            <person name="Allshire R."/>
            <person name="Baulcombe D."/>
            <person name="Birren B.W."/>
            <person name="Brown W."/>
            <person name="Ekwall K."/>
            <person name="Kellis M."/>
            <person name="Leatherwood J."/>
            <person name="Levin H."/>
            <person name="Margalit H."/>
            <person name="Martienssen R."/>
            <person name="Nieduszynski C.A."/>
            <person name="Spatafora J.W."/>
            <person name="Friedman N."/>
            <person name="Dalgaard J.Z."/>
            <person name="Baumann P."/>
            <person name="Niki H."/>
            <person name="Regev A."/>
            <person name="Nusbaum C."/>
        </authorList>
    </citation>
    <scope>NUCLEOTIDE SEQUENCE [LARGE SCALE GENOMIC DNA]</scope>
    <source>
        <strain>yFS275 / FY16936</strain>
    </source>
</reference>
<comment type="function">
    <text evidence="1">Mitochondrial GTPase that catalyzes the GTP-dependent ribosomal translocation step during translation elongation. During this step, the ribosome changes from the pre-translocational (PRE) to the post-translocational (POST) state as the newly formed A-site-bound peptidyl-tRNA and P-site-bound deacylated tRNA move to the P and E sites, respectively. Catalyzes the coordinated movement of the two tRNA molecules, the mRNA and conformational changes in the ribosome.</text>
</comment>
<comment type="pathway">
    <text evidence="1">Protein biosynthesis; polypeptide chain elongation.</text>
</comment>
<comment type="subcellular location">
    <subcellularLocation>
        <location evidence="1">Mitochondrion</location>
    </subcellularLocation>
</comment>
<comment type="similarity">
    <text evidence="2">Belongs to the TRAFAC class translation factor GTPase superfamily. Classic translation factor GTPase family. EF-G/EF-2 subfamily.</text>
</comment>
<sequence length="763" mass="85389">MFMRLKVLEMNSIRRQTLLRQFTNVYNVVSRSARLCSQAIPKRLFYSTGSRANSIPDALSRLRNIGISAHIDSGKTTFTERVLFYTGRIKDIHEVRGKDNVGAKMDSMELEREKGITIQSAATYCNWKRKQKDGDEQDYIINIIDTPGHIDFTIEVERALRVLDGAVLILCAVSGVQSQTITVDRQMRRYNVPRITFINKMDRMGANPWRAIEQLNAKLRIAAAAVQIPIGSEDNLEGVVDLIHMQSIYNRGKKGEKVEITGSIPEHLKELANEKRALLIETLANIDEEIGELYVMEETPSPEQLMSAIRSATLSRQFTPVFMGSALANIGVQPLLDAVCDYLPNPSDVTNTALDVNQGEKSVTLHTDYNEPLVALAFKLEDGRFGQLTYMRVYQGVLKRGNQITNVNSGKRIKVPRLVLLHSDEMEDVEEAPAGSICAMFGVDCASGDTFTDGSIKYVMSSMYVPEPVVSLSIKPKNKDSPNFSKALARFQREDPTFRVHIDKESNETIISGMGELHLEIYLERLAREYRTECITGKPRVAFRETITTKAPFSYLHKKQSGGAGQYAKVEGYIEYMEPKEDGNGRLVDHEFVNHVVGGAIPSQYIPACEKAFKECLERGFLTGHPIKNCRLVLEDGAAHSVDSSELAFRVALTHAFRQAFMAAKPIVLEPIMNVTVTAPVDDQGVVIGNLDKRKATIVNTDIGEEEFTLQAEVPLNSMFSYSSDIRSSTQGKGEFTMEFLKYLPAPGYVQKELIAEYEKQHK</sequence>
<feature type="transit peptide" description="Mitochondrion" evidence="1">
    <location>
        <begin position="1"/>
        <end position="52"/>
    </location>
</feature>
<feature type="chain" id="PRO_0000385583" description="Elongation factor G, mitochondrial">
    <location>
        <begin position="53"/>
        <end position="763"/>
    </location>
</feature>
<feature type="domain" description="tr-type G">
    <location>
        <begin position="60"/>
        <end position="347"/>
    </location>
</feature>
<feature type="binding site" evidence="1">
    <location>
        <begin position="69"/>
        <end position="76"/>
    </location>
    <ligand>
        <name>GTP</name>
        <dbReference type="ChEBI" id="CHEBI:37565"/>
    </ligand>
</feature>
<feature type="binding site" evidence="1">
    <location>
        <begin position="145"/>
        <end position="149"/>
    </location>
    <ligand>
        <name>GTP</name>
        <dbReference type="ChEBI" id="CHEBI:37565"/>
    </ligand>
</feature>
<feature type="binding site" evidence="1">
    <location>
        <begin position="199"/>
        <end position="202"/>
    </location>
    <ligand>
        <name>GTP</name>
        <dbReference type="ChEBI" id="CHEBI:37565"/>
    </ligand>
</feature>